<keyword id="KW-0961">Cell wall biogenesis/degradation</keyword>
<keyword id="KW-0378">Hydrolase</keyword>
<keyword id="KW-1185">Reference proteome</keyword>
<keyword id="KW-0964">Secreted</keyword>
<keyword id="KW-0732">Signal</keyword>
<comment type="function">
    <text evidence="2">Cleaves the peptide side chain from the N-acetylmuramic acid residues in peptidoglycan. This is a step in the formation of muramic delta-lactam residues in spore cortex.</text>
</comment>
<comment type="catalytic activity">
    <reaction evidence="2">
        <text>Hydrolyzes the link between N-acetylmuramoyl residues and L-amino acid residues in certain cell-wall glycopeptides.</text>
        <dbReference type="EC" id="3.5.1.28"/>
    </reaction>
</comment>
<comment type="subcellular location">
    <subcellularLocation>
        <location evidence="3">Secreted</location>
    </subcellularLocation>
</comment>
<comment type="developmental stage">
    <text evidence="2">Expression of cwlD takes place in both the mother cell and forespore compartments of sporulating cells.</text>
</comment>
<comment type="miscellaneous">
    <text evidence="4">CwlD and PdaA are necessary and sufficient for muramic delta-lactam production in B.subtilis spore peptidoglycan.</text>
</comment>
<comment type="similarity">
    <text evidence="3">Belongs to the N-acetylmuramoyl-L-alanine amidase 3 family.</text>
</comment>
<evidence type="ECO:0000255" key="1"/>
<evidence type="ECO:0000269" key="2">
    <source>
    </source>
</evidence>
<evidence type="ECO:0000305" key="3"/>
<evidence type="ECO:0000305" key="4">
    <source>
    </source>
</evidence>
<name>CWLD_BACSU</name>
<dbReference type="EC" id="3.5.1.28"/>
<dbReference type="EMBL" id="X74737">
    <property type="protein sequence ID" value="CAA52758.1"/>
    <property type="molecule type" value="Genomic_DNA"/>
</dbReference>
<dbReference type="EMBL" id="D64126">
    <property type="protein sequence ID" value="BAA10993.1"/>
    <property type="molecule type" value="Genomic_DNA"/>
</dbReference>
<dbReference type="EMBL" id="AL009126">
    <property type="protein sequence ID" value="CAB11929.1"/>
    <property type="molecule type" value="Genomic_DNA"/>
</dbReference>
<dbReference type="PIR" id="G69610">
    <property type="entry name" value="G69610"/>
</dbReference>
<dbReference type="RefSeq" id="NP_388034.1">
    <property type="nucleotide sequence ID" value="NC_000964.3"/>
</dbReference>
<dbReference type="RefSeq" id="WP_004399672.1">
    <property type="nucleotide sequence ID" value="NZ_OZ025638.1"/>
</dbReference>
<dbReference type="SMR" id="P50864"/>
<dbReference type="FunCoup" id="P50864">
    <property type="interactions" value="100"/>
</dbReference>
<dbReference type="STRING" id="224308.BSU01530"/>
<dbReference type="PaxDb" id="224308-BSU01530"/>
<dbReference type="DNASU" id="938917"/>
<dbReference type="EnsemblBacteria" id="CAB11929">
    <property type="protein sequence ID" value="CAB11929"/>
    <property type="gene ID" value="BSU_01530"/>
</dbReference>
<dbReference type="GeneID" id="938917"/>
<dbReference type="KEGG" id="bsu:BSU01530"/>
<dbReference type="PATRIC" id="fig|224308.179.peg.157"/>
<dbReference type="eggNOG" id="COG0860">
    <property type="taxonomic scope" value="Bacteria"/>
</dbReference>
<dbReference type="InParanoid" id="P50864"/>
<dbReference type="OrthoDB" id="9806267at2"/>
<dbReference type="PhylomeDB" id="P50864"/>
<dbReference type="BioCyc" id="BSUB:BSU01530-MONOMER"/>
<dbReference type="BioCyc" id="MetaCyc:BSU01530-MONOMER"/>
<dbReference type="Proteomes" id="UP000001570">
    <property type="component" value="Chromosome"/>
</dbReference>
<dbReference type="GO" id="GO:0005576">
    <property type="term" value="C:extracellular region"/>
    <property type="evidence" value="ECO:0007669"/>
    <property type="project" value="UniProtKB-SubCell"/>
</dbReference>
<dbReference type="GO" id="GO:0008745">
    <property type="term" value="F:N-acetylmuramoyl-L-alanine amidase activity"/>
    <property type="evidence" value="ECO:0007669"/>
    <property type="project" value="UniProtKB-EC"/>
</dbReference>
<dbReference type="GO" id="GO:0071555">
    <property type="term" value="P:cell wall organization"/>
    <property type="evidence" value="ECO:0007669"/>
    <property type="project" value="UniProtKB-KW"/>
</dbReference>
<dbReference type="GO" id="GO:0009253">
    <property type="term" value="P:peptidoglycan catabolic process"/>
    <property type="evidence" value="ECO:0007669"/>
    <property type="project" value="InterPro"/>
</dbReference>
<dbReference type="CDD" id="cd02696">
    <property type="entry name" value="MurNAc-LAA"/>
    <property type="match status" value="1"/>
</dbReference>
<dbReference type="Gene3D" id="3.40.630.40">
    <property type="entry name" value="Zn-dependent exopeptidases"/>
    <property type="match status" value="1"/>
</dbReference>
<dbReference type="InterPro" id="IPR002508">
    <property type="entry name" value="MurNAc-LAA_cat"/>
</dbReference>
<dbReference type="InterPro" id="IPR050695">
    <property type="entry name" value="N-acetylmuramoyl_amidase_3"/>
</dbReference>
<dbReference type="InterPro" id="IPR014234">
    <property type="entry name" value="Spore_CwlD"/>
</dbReference>
<dbReference type="NCBIfam" id="TIGR02883">
    <property type="entry name" value="spore_cwlD"/>
    <property type="match status" value="1"/>
</dbReference>
<dbReference type="PANTHER" id="PTHR30404">
    <property type="entry name" value="N-ACETYLMURAMOYL-L-ALANINE AMIDASE"/>
    <property type="match status" value="1"/>
</dbReference>
<dbReference type="PANTHER" id="PTHR30404:SF0">
    <property type="entry name" value="N-ACETYLMURAMOYL-L-ALANINE AMIDASE AMIC"/>
    <property type="match status" value="1"/>
</dbReference>
<dbReference type="Pfam" id="PF01520">
    <property type="entry name" value="Amidase_3"/>
    <property type="match status" value="1"/>
</dbReference>
<dbReference type="SMART" id="SM00646">
    <property type="entry name" value="Ami_3"/>
    <property type="match status" value="1"/>
</dbReference>
<dbReference type="SUPFAM" id="SSF53187">
    <property type="entry name" value="Zn-dependent exopeptidases"/>
    <property type="match status" value="1"/>
</dbReference>
<protein>
    <recommendedName>
        <fullName>Germination-specific N-acetylmuramoyl-L-alanine amidase</fullName>
        <ecNumber>3.5.1.28</ecNumber>
    </recommendedName>
    <alternativeName>
        <fullName>Autolysin</fullName>
    </alternativeName>
    <alternativeName>
        <fullName>Cell wall hydrolase</fullName>
    </alternativeName>
</protein>
<gene>
    <name type="primary">cwlD</name>
    <name type="ordered locus">BSU01530</name>
</gene>
<organism>
    <name type="scientific">Bacillus subtilis (strain 168)</name>
    <dbReference type="NCBI Taxonomy" id="224308"/>
    <lineage>
        <taxon>Bacteria</taxon>
        <taxon>Bacillati</taxon>
        <taxon>Bacillota</taxon>
        <taxon>Bacilli</taxon>
        <taxon>Bacillales</taxon>
        <taxon>Bacillaceae</taxon>
        <taxon>Bacillus</taxon>
    </lineage>
</organism>
<reference key="1">
    <citation type="journal article" date="1995" name="J. Bacteriol.">
        <title>Nucleotide sequence and regulation of a new putative cell wall hydrolase gene, cwlD, which affects germination in Bacillus subtilis.</title>
        <authorList>
            <person name="Sekiguchi J."/>
            <person name="Akeo K."/>
            <person name="Yamamoto H."/>
            <person name="Khasanov F.K."/>
            <person name="Alonso J.C."/>
            <person name="Kuroda A."/>
        </authorList>
    </citation>
    <scope>NUCLEOTIDE SEQUENCE [GENOMIC DNA]</scope>
</reference>
<reference key="2">
    <citation type="journal article" date="1996" name="Microbiology">
        <title>Sequence analysis of a 50 kb region between spo0H and rrnH on the Bacillus subtilis chromosome.</title>
        <authorList>
            <person name="Yasumoto K."/>
            <person name="Liu H."/>
            <person name="Jeong S.M."/>
            <person name="Ohashi Y."/>
            <person name="Kakinuma S."/>
            <person name="Tanaka K."/>
            <person name="Kawamura F."/>
            <person name="Yoshikawa H."/>
            <person name="Takahashi H."/>
        </authorList>
    </citation>
    <scope>NUCLEOTIDE SEQUENCE [GENOMIC DNA]</scope>
    <source>
        <strain>168</strain>
    </source>
</reference>
<reference key="3">
    <citation type="journal article" date="1997" name="Nature">
        <title>The complete genome sequence of the Gram-positive bacterium Bacillus subtilis.</title>
        <authorList>
            <person name="Kunst F."/>
            <person name="Ogasawara N."/>
            <person name="Moszer I."/>
            <person name="Albertini A.M."/>
            <person name="Alloni G."/>
            <person name="Azevedo V."/>
            <person name="Bertero M.G."/>
            <person name="Bessieres P."/>
            <person name="Bolotin A."/>
            <person name="Borchert S."/>
            <person name="Borriss R."/>
            <person name="Boursier L."/>
            <person name="Brans A."/>
            <person name="Braun M."/>
            <person name="Brignell S.C."/>
            <person name="Bron S."/>
            <person name="Brouillet S."/>
            <person name="Bruschi C.V."/>
            <person name="Caldwell B."/>
            <person name="Capuano V."/>
            <person name="Carter N.M."/>
            <person name="Choi S.-K."/>
            <person name="Codani J.-J."/>
            <person name="Connerton I.F."/>
            <person name="Cummings N.J."/>
            <person name="Daniel R.A."/>
            <person name="Denizot F."/>
            <person name="Devine K.M."/>
            <person name="Duesterhoeft A."/>
            <person name="Ehrlich S.D."/>
            <person name="Emmerson P.T."/>
            <person name="Entian K.-D."/>
            <person name="Errington J."/>
            <person name="Fabret C."/>
            <person name="Ferrari E."/>
            <person name="Foulger D."/>
            <person name="Fritz C."/>
            <person name="Fujita M."/>
            <person name="Fujita Y."/>
            <person name="Fuma S."/>
            <person name="Galizzi A."/>
            <person name="Galleron N."/>
            <person name="Ghim S.-Y."/>
            <person name="Glaser P."/>
            <person name="Goffeau A."/>
            <person name="Golightly E.J."/>
            <person name="Grandi G."/>
            <person name="Guiseppi G."/>
            <person name="Guy B.J."/>
            <person name="Haga K."/>
            <person name="Haiech J."/>
            <person name="Harwood C.R."/>
            <person name="Henaut A."/>
            <person name="Hilbert H."/>
            <person name="Holsappel S."/>
            <person name="Hosono S."/>
            <person name="Hullo M.-F."/>
            <person name="Itaya M."/>
            <person name="Jones L.-M."/>
            <person name="Joris B."/>
            <person name="Karamata D."/>
            <person name="Kasahara Y."/>
            <person name="Klaerr-Blanchard M."/>
            <person name="Klein C."/>
            <person name="Kobayashi Y."/>
            <person name="Koetter P."/>
            <person name="Koningstein G."/>
            <person name="Krogh S."/>
            <person name="Kumano M."/>
            <person name="Kurita K."/>
            <person name="Lapidus A."/>
            <person name="Lardinois S."/>
            <person name="Lauber J."/>
            <person name="Lazarevic V."/>
            <person name="Lee S.-M."/>
            <person name="Levine A."/>
            <person name="Liu H."/>
            <person name="Masuda S."/>
            <person name="Mauel C."/>
            <person name="Medigue C."/>
            <person name="Medina N."/>
            <person name="Mellado R.P."/>
            <person name="Mizuno M."/>
            <person name="Moestl D."/>
            <person name="Nakai S."/>
            <person name="Noback M."/>
            <person name="Noone D."/>
            <person name="O'Reilly M."/>
            <person name="Ogawa K."/>
            <person name="Ogiwara A."/>
            <person name="Oudega B."/>
            <person name="Park S.-H."/>
            <person name="Parro V."/>
            <person name="Pohl T.M."/>
            <person name="Portetelle D."/>
            <person name="Porwollik S."/>
            <person name="Prescott A.M."/>
            <person name="Presecan E."/>
            <person name="Pujic P."/>
            <person name="Purnelle B."/>
            <person name="Rapoport G."/>
            <person name="Rey M."/>
            <person name="Reynolds S."/>
            <person name="Rieger M."/>
            <person name="Rivolta C."/>
            <person name="Rocha E."/>
            <person name="Roche B."/>
            <person name="Rose M."/>
            <person name="Sadaie Y."/>
            <person name="Sato T."/>
            <person name="Scanlan E."/>
            <person name="Schleich S."/>
            <person name="Schroeter R."/>
            <person name="Scoffone F."/>
            <person name="Sekiguchi J."/>
            <person name="Sekowska A."/>
            <person name="Seror S.J."/>
            <person name="Serror P."/>
            <person name="Shin B.-S."/>
            <person name="Soldo B."/>
            <person name="Sorokin A."/>
            <person name="Tacconi E."/>
            <person name="Takagi T."/>
            <person name="Takahashi H."/>
            <person name="Takemaru K."/>
            <person name="Takeuchi M."/>
            <person name="Tamakoshi A."/>
            <person name="Tanaka T."/>
            <person name="Terpstra P."/>
            <person name="Tognoni A."/>
            <person name="Tosato V."/>
            <person name="Uchiyama S."/>
            <person name="Vandenbol M."/>
            <person name="Vannier F."/>
            <person name="Vassarotti A."/>
            <person name="Viari A."/>
            <person name="Wambutt R."/>
            <person name="Wedler E."/>
            <person name="Wedler H."/>
            <person name="Weitzenegger T."/>
            <person name="Winters P."/>
            <person name="Wipat A."/>
            <person name="Yamamoto H."/>
            <person name="Yamane K."/>
            <person name="Yasumoto K."/>
            <person name="Yata K."/>
            <person name="Yoshida K."/>
            <person name="Yoshikawa H.-F."/>
            <person name="Zumstein E."/>
            <person name="Yoshikawa H."/>
            <person name="Danchin A."/>
        </authorList>
    </citation>
    <scope>NUCLEOTIDE SEQUENCE [LARGE SCALE GENOMIC DNA]</scope>
    <source>
        <strain>168</strain>
    </source>
</reference>
<reference key="4">
    <citation type="journal article" date="2004" name="J. Bacteriol.">
        <title>Production of muramic delta-lactam in Bacillus subtilis spore peptidoglycan.</title>
        <authorList>
            <person name="Gilmore M.E."/>
            <person name="Bandyopadhyay D."/>
            <person name="Dean A.M."/>
            <person name="Linnstaedt S.D."/>
            <person name="Popham D.L."/>
        </authorList>
    </citation>
    <scope>FUNCTION</scope>
    <scope>CATALYTIC ACTIVITY</scope>
    <scope>DEVELOPMENTAL STAGE</scope>
</reference>
<accession>P50864</accession>
<proteinExistence type="evidence at protein level"/>
<feature type="signal peptide" evidence="1">
    <location>
        <begin position="1"/>
        <end position="27"/>
    </location>
</feature>
<feature type="chain" id="PRO_0000164419" description="Germination-specific N-acetylmuramoyl-L-alanine amidase">
    <location>
        <begin position="28"/>
        <end position="237"/>
    </location>
</feature>
<feature type="domain" description="MurNAc-LAA" evidence="1">
    <location>
        <begin position="43"/>
        <end position="226"/>
    </location>
</feature>
<sequence length="237" mass="27006">MRKKLKWLSFLLGFIILLFLFKYQFSNNDSWKPWSLPLSGKIIYLDPGHGGPDGGAVGGKLLEKDVTLEVAFRVRDYLQEQGALVIMTRESDTDLAPEGTKGYSRRKAEDLRQRVKLINHSEAELYISIHLNAIPSQKWSGAQSFYYGKYAENEKVAKYIQDELRRNLENTTRKAKRIHGIYLMQNVTKPGALIEVGFLSNPSEATLLGKPKYQDKVASSIYKGILRYFTEKGDPPE</sequence>